<accession>P15489</accession>
<proteinExistence type="predicted"/>
<evidence type="ECO:0000256" key="1">
    <source>
        <dbReference type="SAM" id="MobiDB-lite"/>
    </source>
</evidence>
<sequence length="529" mass="60251">MPIYFLVLKGTGHVQALAFPKSVSDCLGRVTDTEPMLQQSIEACDRVSTETQQLLDILKQQQDDSVLEIQDTLTIAAQGLGPQQRLCAALALLHEREPSIVQQYHDVVGSLSLPEMLKTSHVARSITFHSLLHYERLCTRLHYCHLQQSVHKQKPVRMPGKLRGRWWCQESEPQQVRFGQNVRKHVVSIGGVYAQERCMTTWSTYSVDICLINLSLTRDRPASVGGLQLQVYRISASHAEPSGKRVGHIRHRAGTRQQLQEELCTKKEKLAEMTVLTQEKLSEVIKLREITMASKAESVKLACLQKLVSPQTVSRVLSFSGISYNRLILFYVRQFIFGLAWSLSCQLPLAERHSLSNLVCRYYSDYLDQPSSEVSTKTLLTLALGMQAMLTTRTTYSLISWRLRTSIQTVSTGSVRWILCLSALPTQRLLAQILRNVPWSQRRTQFQIRPISMHHRPYGYQATVQHPPPQSSYEEDGRRPPTQPAHTSLLTYVCSINSEYWQLNDPENCELRSFFFLQSIESMSTPSSH</sequence>
<keyword id="KW-0346">Stress response</keyword>
<protein>
    <recommendedName>
        <fullName>Heat shock protein 60</fullName>
    </recommendedName>
</protein>
<organism>
    <name type="scientific">Giardia intestinalis</name>
    <name type="common">Giardia lamblia</name>
    <dbReference type="NCBI Taxonomy" id="5741"/>
    <lineage>
        <taxon>Eukaryota</taxon>
        <taxon>Metamonada</taxon>
        <taxon>Diplomonadida</taxon>
        <taxon>Hexamitidae</taxon>
        <taxon>Giardiinae</taxon>
        <taxon>Giardia</taxon>
    </lineage>
</organism>
<name>HS60_GIAIN</name>
<feature type="chain" id="PRO_0000084075" description="Heat shock protein 60">
    <location>
        <begin position="1"/>
        <end position="529"/>
    </location>
</feature>
<feature type="region of interest" description="Disordered" evidence="1">
    <location>
        <begin position="460"/>
        <end position="484"/>
    </location>
</feature>
<reference key="1">
    <citation type="journal article" date="1990" name="Nucleic Acids Res.">
        <title>A heat shock protein gene in Giardia lamblia unrelated to HSP70.</title>
        <authorList>
            <person name="Aggarwal A."/>
            <person name="de la Cruz V.F."/>
            <person name="Nash T.E."/>
        </authorList>
    </citation>
    <scope>NUCLEOTIDE SEQUENCE [GENOMIC DNA]</scope>
    <source>
        <strain>ATCC 30957 / WB</strain>
    </source>
</reference>
<dbReference type="EMBL" id="X16738">
    <property type="protein sequence ID" value="CAA34711.1"/>
    <property type="molecule type" value="Genomic_DNA"/>
</dbReference>
<dbReference type="PIR" id="S10237">
    <property type="entry name" value="HHGQ60"/>
</dbReference>
<dbReference type="SMR" id="P15489"/>
<dbReference type="VEuPathDB" id="GiardiaDB:DHA2_150611"/>
<dbReference type="VEuPathDB" id="GiardiaDB:GL50581_4498"/>
<dbReference type="VEuPathDB" id="GiardiaDB:GL50803_0017478"/>
<dbReference type="VEuPathDB" id="GiardiaDB:QR46_0937"/>